<comment type="function">
    <text evidence="1">Catalyzes the attachment of threonine to tRNA(Thr) in a two-step reaction: L-threonine is first activated by ATP to form Thr-AMP and then transferred to the acceptor end of tRNA(Thr). Also edits incorrectly charged L-seryl-tRNA(Thr).</text>
</comment>
<comment type="catalytic activity">
    <reaction evidence="1">
        <text>tRNA(Thr) + L-threonine + ATP = L-threonyl-tRNA(Thr) + AMP + diphosphate + H(+)</text>
        <dbReference type="Rhea" id="RHEA:24624"/>
        <dbReference type="Rhea" id="RHEA-COMP:9670"/>
        <dbReference type="Rhea" id="RHEA-COMP:9704"/>
        <dbReference type="ChEBI" id="CHEBI:15378"/>
        <dbReference type="ChEBI" id="CHEBI:30616"/>
        <dbReference type="ChEBI" id="CHEBI:33019"/>
        <dbReference type="ChEBI" id="CHEBI:57926"/>
        <dbReference type="ChEBI" id="CHEBI:78442"/>
        <dbReference type="ChEBI" id="CHEBI:78534"/>
        <dbReference type="ChEBI" id="CHEBI:456215"/>
        <dbReference type="EC" id="6.1.1.3"/>
    </reaction>
</comment>
<comment type="cofactor">
    <cofactor evidence="1">
        <name>Zn(2+)</name>
        <dbReference type="ChEBI" id="CHEBI:29105"/>
    </cofactor>
    <text evidence="1">Binds 1 zinc ion per subunit.</text>
</comment>
<comment type="subunit">
    <text evidence="1">Homodimer.</text>
</comment>
<comment type="subcellular location">
    <subcellularLocation>
        <location evidence="1">Cytoplasm</location>
    </subcellularLocation>
</comment>
<comment type="similarity">
    <text evidence="1">Belongs to the class-II aminoacyl-tRNA synthetase family.</text>
</comment>
<keyword id="KW-0030">Aminoacyl-tRNA synthetase</keyword>
<keyword id="KW-0067">ATP-binding</keyword>
<keyword id="KW-0963">Cytoplasm</keyword>
<keyword id="KW-0436">Ligase</keyword>
<keyword id="KW-0479">Metal-binding</keyword>
<keyword id="KW-0547">Nucleotide-binding</keyword>
<keyword id="KW-0648">Protein biosynthesis</keyword>
<keyword id="KW-0694">RNA-binding</keyword>
<keyword id="KW-0820">tRNA-binding</keyword>
<keyword id="KW-0862">Zinc</keyword>
<organism>
    <name type="scientific">Burkholderia cenocepacia (strain ATCC BAA-245 / DSM 16553 / LMG 16656 / NCTC 13227 / J2315 / CF5610)</name>
    <name type="common">Burkholderia cepacia (strain J2315)</name>
    <dbReference type="NCBI Taxonomy" id="216591"/>
    <lineage>
        <taxon>Bacteria</taxon>
        <taxon>Pseudomonadati</taxon>
        <taxon>Pseudomonadota</taxon>
        <taxon>Betaproteobacteria</taxon>
        <taxon>Burkholderiales</taxon>
        <taxon>Burkholderiaceae</taxon>
        <taxon>Burkholderia</taxon>
        <taxon>Burkholderia cepacia complex</taxon>
    </lineage>
</organism>
<name>SYT_BURCJ</name>
<proteinExistence type="inferred from homology"/>
<reference key="1">
    <citation type="journal article" date="2009" name="J. Bacteriol.">
        <title>The genome of Burkholderia cenocepacia J2315, an epidemic pathogen of cystic fibrosis patients.</title>
        <authorList>
            <person name="Holden M.T."/>
            <person name="Seth-Smith H.M."/>
            <person name="Crossman L.C."/>
            <person name="Sebaihia M."/>
            <person name="Bentley S.D."/>
            <person name="Cerdeno-Tarraga A.M."/>
            <person name="Thomson N.R."/>
            <person name="Bason N."/>
            <person name="Quail M.A."/>
            <person name="Sharp S."/>
            <person name="Cherevach I."/>
            <person name="Churcher C."/>
            <person name="Goodhead I."/>
            <person name="Hauser H."/>
            <person name="Holroyd N."/>
            <person name="Mungall K."/>
            <person name="Scott P."/>
            <person name="Walker D."/>
            <person name="White B."/>
            <person name="Rose H."/>
            <person name="Iversen P."/>
            <person name="Mil-Homens D."/>
            <person name="Rocha E.P."/>
            <person name="Fialho A.M."/>
            <person name="Baldwin A."/>
            <person name="Dowson C."/>
            <person name="Barrell B.G."/>
            <person name="Govan J.R."/>
            <person name="Vandamme P."/>
            <person name="Hart C.A."/>
            <person name="Mahenthiralingam E."/>
            <person name="Parkhill J."/>
        </authorList>
    </citation>
    <scope>NUCLEOTIDE SEQUENCE [LARGE SCALE GENOMIC DNA]</scope>
    <source>
        <strain>ATCC BAA-245 / DSM 16553 / LMG 16656 / NCTC 13227 / J2315 / CF5610</strain>
    </source>
</reference>
<feature type="chain" id="PRO_1000098550" description="Threonine--tRNA ligase">
    <location>
        <begin position="1"/>
        <end position="635"/>
    </location>
</feature>
<feature type="domain" description="TGS" evidence="2">
    <location>
        <begin position="1"/>
        <end position="61"/>
    </location>
</feature>
<feature type="region of interest" description="Catalytic" evidence="1">
    <location>
        <begin position="242"/>
        <end position="533"/>
    </location>
</feature>
<feature type="binding site" evidence="1">
    <location>
        <position position="333"/>
    </location>
    <ligand>
        <name>Zn(2+)</name>
        <dbReference type="ChEBI" id="CHEBI:29105"/>
    </ligand>
</feature>
<feature type="binding site" evidence="1">
    <location>
        <position position="384"/>
    </location>
    <ligand>
        <name>Zn(2+)</name>
        <dbReference type="ChEBI" id="CHEBI:29105"/>
    </ligand>
</feature>
<feature type="binding site" evidence="1">
    <location>
        <position position="510"/>
    </location>
    <ligand>
        <name>Zn(2+)</name>
        <dbReference type="ChEBI" id="CHEBI:29105"/>
    </ligand>
</feature>
<dbReference type="EC" id="6.1.1.3" evidence="1"/>
<dbReference type="EMBL" id="AM747720">
    <property type="protein sequence ID" value="CAR51780.1"/>
    <property type="molecule type" value="Genomic_DNA"/>
</dbReference>
<dbReference type="RefSeq" id="WP_006486105.1">
    <property type="nucleotide sequence ID" value="NC_011000.1"/>
</dbReference>
<dbReference type="SMR" id="B4E7I6"/>
<dbReference type="GeneID" id="56558004"/>
<dbReference type="KEGG" id="bcj:BCAL1481"/>
<dbReference type="eggNOG" id="COG0441">
    <property type="taxonomic scope" value="Bacteria"/>
</dbReference>
<dbReference type="HOGENOM" id="CLU_008554_0_1_4"/>
<dbReference type="BioCyc" id="BCEN216591:G1G1V-1648-MONOMER"/>
<dbReference type="Proteomes" id="UP000001035">
    <property type="component" value="Chromosome 1"/>
</dbReference>
<dbReference type="GO" id="GO:0005829">
    <property type="term" value="C:cytosol"/>
    <property type="evidence" value="ECO:0007669"/>
    <property type="project" value="TreeGrafter"/>
</dbReference>
<dbReference type="GO" id="GO:0005524">
    <property type="term" value="F:ATP binding"/>
    <property type="evidence" value="ECO:0007669"/>
    <property type="project" value="UniProtKB-UniRule"/>
</dbReference>
<dbReference type="GO" id="GO:0046872">
    <property type="term" value="F:metal ion binding"/>
    <property type="evidence" value="ECO:0007669"/>
    <property type="project" value="UniProtKB-KW"/>
</dbReference>
<dbReference type="GO" id="GO:0004829">
    <property type="term" value="F:threonine-tRNA ligase activity"/>
    <property type="evidence" value="ECO:0007669"/>
    <property type="project" value="UniProtKB-UniRule"/>
</dbReference>
<dbReference type="GO" id="GO:0000049">
    <property type="term" value="F:tRNA binding"/>
    <property type="evidence" value="ECO:0007669"/>
    <property type="project" value="UniProtKB-KW"/>
</dbReference>
<dbReference type="GO" id="GO:0006435">
    <property type="term" value="P:threonyl-tRNA aminoacylation"/>
    <property type="evidence" value="ECO:0007669"/>
    <property type="project" value="UniProtKB-UniRule"/>
</dbReference>
<dbReference type="CDD" id="cd01667">
    <property type="entry name" value="TGS_ThrRS"/>
    <property type="match status" value="1"/>
</dbReference>
<dbReference type="CDD" id="cd00860">
    <property type="entry name" value="ThrRS_anticodon"/>
    <property type="match status" value="1"/>
</dbReference>
<dbReference type="CDD" id="cd00771">
    <property type="entry name" value="ThrRS_core"/>
    <property type="match status" value="1"/>
</dbReference>
<dbReference type="FunFam" id="3.10.20.30:FF:000005">
    <property type="entry name" value="Threonine--tRNA ligase"/>
    <property type="match status" value="1"/>
</dbReference>
<dbReference type="FunFam" id="3.30.54.20:FF:000002">
    <property type="entry name" value="Threonine--tRNA ligase"/>
    <property type="match status" value="1"/>
</dbReference>
<dbReference type="FunFam" id="3.30.930.10:FF:000002">
    <property type="entry name" value="Threonine--tRNA ligase"/>
    <property type="match status" value="1"/>
</dbReference>
<dbReference type="FunFam" id="3.40.50.800:FF:000001">
    <property type="entry name" value="Threonine--tRNA ligase"/>
    <property type="match status" value="1"/>
</dbReference>
<dbReference type="FunFam" id="3.30.980.10:FF:000005">
    <property type="entry name" value="Threonyl-tRNA synthetase, mitochondrial"/>
    <property type="match status" value="1"/>
</dbReference>
<dbReference type="Gene3D" id="3.10.20.30">
    <property type="match status" value="1"/>
</dbReference>
<dbReference type="Gene3D" id="3.30.54.20">
    <property type="match status" value="1"/>
</dbReference>
<dbReference type="Gene3D" id="3.40.50.800">
    <property type="entry name" value="Anticodon-binding domain"/>
    <property type="match status" value="1"/>
</dbReference>
<dbReference type="Gene3D" id="3.30.930.10">
    <property type="entry name" value="Bira Bifunctional Protein, Domain 2"/>
    <property type="match status" value="1"/>
</dbReference>
<dbReference type="Gene3D" id="3.30.980.10">
    <property type="entry name" value="Threonyl-trna Synthetase, Chain A, domain 2"/>
    <property type="match status" value="1"/>
</dbReference>
<dbReference type="HAMAP" id="MF_00184">
    <property type="entry name" value="Thr_tRNA_synth"/>
    <property type="match status" value="1"/>
</dbReference>
<dbReference type="InterPro" id="IPR002314">
    <property type="entry name" value="aa-tRNA-synt_IIb"/>
</dbReference>
<dbReference type="InterPro" id="IPR006195">
    <property type="entry name" value="aa-tRNA-synth_II"/>
</dbReference>
<dbReference type="InterPro" id="IPR045864">
    <property type="entry name" value="aa-tRNA-synth_II/BPL/LPL"/>
</dbReference>
<dbReference type="InterPro" id="IPR004154">
    <property type="entry name" value="Anticodon-bd"/>
</dbReference>
<dbReference type="InterPro" id="IPR036621">
    <property type="entry name" value="Anticodon-bd_dom_sf"/>
</dbReference>
<dbReference type="InterPro" id="IPR012675">
    <property type="entry name" value="Beta-grasp_dom_sf"/>
</dbReference>
<dbReference type="InterPro" id="IPR004095">
    <property type="entry name" value="TGS"/>
</dbReference>
<dbReference type="InterPro" id="IPR012676">
    <property type="entry name" value="TGS-like"/>
</dbReference>
<dbReference type="InterPro" id="IPR002320">
    <property type="entry name" value="Thr-tRNA-ligase_IIa"/>
</dbReference>
<dbReference type="InterPro" id="IPR018163">
    <property type="entry name" value="Thr/Ala-tRNA-synth_IIc_edit"/>
</dbReference>
<dbReference type="InterPro" id="IPR047246">
    <property type="entry name" value="ThrRS_anticodon"/>
</dbReference>
<dbReference type="InterPro" id="IPR033728">
    <property type="entry name" value="ThrRS_core"/>
</dbReference>
<dbReference type="InterPro" id="IPR012947">
    <property type="entry name" value="tRNA_SAD"/>
</dbReference>
<dbReference type="NCBIfam" id="TIGR00418">
    <property type="entry name" value="thrS"/>
    <property type="match status" value="1"/>
</dbReference>
<dbReference type="PANTHER" id="PTHR11451:SF44">
    <property type="entry name" value="THREONINE--TRNA LIGASE, CHLOROPLASTIC_MITOCHONDRIAL 2"/>
    <property type="match status" value="1"/>
</dbReference>
<dbReference type="PANTHER" id="PTHR11451">
    <property type="entry name" value="THREONINE-TRNA LIGASE"/>
    <property type="match status" value="1"/>
</dbReference>
<dbReference type="Pfam" id="PF03129">
    <property type="entry name" value="HGTP_anticodon"/>
    <property type="match status" value="1"/>
</dbReference>
<dbReference type="Pfam" id="PF02824">
    <property type="entry name" value="TGS"/>
    <property type="match status" value="1"/>
</dbReference>
<dbReference type="Pfam" id="PF00587">
    <property type="entry name" value="tRNA-synt_2b"/>
    <property type="match status" value="1"/>
</dbReference>
<dbReference type="Pfam" id="PF07973">
    <property type="entry name" value="tRNA_SAD"/>
    <property type="match status" value="1"/>
</dbReference>
<dbReference type="PRINTS" id="PR01047">
    <property type="entry name" value="TRNASYNTHTHR"/>
</dbReference>
<dbReference type="SMART" id="SM00863">
    <property type="entry name" value="tRNA_SAD"/>
    <property type="match status" value="1"/>
</dbReference>
<dbReference type="SUPFAM" id="SSF52954">
    <property type="entry name" value="Class II aaRS ABD-related"/>
    <property type="match status" value="1"/>
</dbReference>
<dbReference type="SUPFAM" id="SSF55681">
    <property type="entry name" value="Class II aaRS and biotin synthetases"/>
    <property type="match status" value="1"/>
</dbReference>
<dbReference type="SUPFAM" id="SSF81271">
    <property type="entry name" value="TGS-like"/>
    <property type="match status" value="1"/>
</dbReference>
<dbReference type="SUPFAM" id="SSF55186">
    <property type="entry name" value="ThrRS/AlaRS common domain"/>
    <property type="match status" value="1"/>
</dbReference>
<dbReference type="PROSITE" id="PS50862">
    <property type="entry name" value="AA_TRNA_LIGASE_II"/>
    <property type="match status" value="1"/>
</dbReference>
<dbReference type="PROSITE" id="PS51880">
    <property type="entry name" value="TGS"/>
    <property type="match status" value="1"/>
</dbReference>
<sequence>MVSIRLPDGSVRQYEHPVTVAEVAASIGPGLAKAALGGKLDGELVDTSTVIDRDASLAIVTDKDADGLDIIRHSTAHLLAYAVKELYPDAQVTIGPVIDNGFYYDFSYNRPFTPEDLEKIEKRMQELAKKDEPVTRRVVSRDEAAGYFRSIGEKYKAEIIESIPQSDEIKLYSHGGFTDLCRGPHVPSTGKLKVFKLMKVAGAYWRGDSKNEQLQRIYGTAWTKKEDQDQYLHMLEEAEKRDHRKLGKQLDLFHMQEESPGMVFWHPKGWALWQQVEQYMRRRVNEAGYLEIKTPMIMDRSLWEASGHWQNYRENMFTTESEKRDYAIKPMNCPGHVQVFKHGLRSYRDLPLRYAEFGSCHRNEASGALHGLMRVRGFVQDDAHIFCTEDQFISESIAFNTLAMSVYKDFGFDHIDIKLSLRPDQRAGTDETWDRAEQGLRDALTACGLTWEELPGEGAFYGPKIEYHIKDALGRSWQCGTLQLDMVLPERLGAEYVAEDNSRRRPVMLHRAIVGSMERFLGILIEHHAGAMPVWLAPYQAIVLNIAESQAEYAQSLAQSLQKQGVRVAADLRNEKISYKIREHTLEKVPYLLVVGDKERDAQTVAVRARGGVDLGVMPVEAFVERLQEDLRSFK</sequence>
<protein>
    <recommendedName>
        <fullName evidence="1">Threonine--tRNA ligase</fullName>
        <ecNumber evidence="1">6.1.1.3</ecNumber>
    </recommendedName>
    <alternativeName>
        <fullName evidence="1">Threonyl-tRNA synthetase</fullName>
        <shortName evidence="1">ThrRS</shortName>
    </alternativeName>
</protein>
<evidence type="ECO:0000255" key="1">
    <source>
        <dbReference type="HAMAP-Rule" id="MF_00184"/>
    </source>
</evidence>
<evidence type="ECO:0000255" key="2">
    <source>
        <dbReference type="PROSITE-ProRule" id="PRU01228"/>
    </source>
</evidence>
<accession>B4E7I6</accession>
<gene>
    <name evidence="1" type="primary">thrS</name>
    <name type="ordered locus">BceJ2315_14480</name>
    <name type="ORF">BCAL1481</name>
</gene>